<proteinExistence type="inferred from homology"/>
<gene>
    <name evidence="1" type="primary">rbcL</name>
</gene>
<protein>
    <recommendedName>
        <fullName evidence="1">Ribulose bisphosphate carboxylase large chain</fullName>
        <shortName evidence="1">RuBisCO large subunit</shortName>
        <ecNumber evidence="1">4.1.1.39</ecNumber>
    </recommendedName>
</protein>
<geneLocation type="chloroplast"/>
<comment type="function">
    <text evidence="1">RuBisCO catalyzes two reactions: the carboxylation of D-ribulose 1,5-bisphosphate, the primary event in carbon dioxide fixation, as well as the oxidative fragmentation of the pentose substrate in the photorespiration process. Both reactions occur simultaneously and in competition at the same active site.</text>
</comment>
<comment type="catalytic activity">
    <reaction evidence="1">
        <text>2 (2R)-3-phosphoglycerate + 2 H(+) = D-ribulose 1,5-bisphosphate + CO2 + H2O</text>
        <dbReference type="Rhea" id="RHEA:23124"/>
        <dbReference type="ChEBI" id="CHEBI:15377"/>
        <dbReference type="ChEBI" id="CHEBI:15378"/>
        <dbReference type="ChEBI" id="CHEBI:16526"/>
        <dbReference type="ChEBI" id="CHEBI:57870"/>
        <dbReference type="ChEBI" id="CHEBI:58272"/>
        <dbReference type="EC" id="4.1.1.39"/>
    </reaction>
</comment>
<comment type="catalytic activity">
    <reaction evidence="1">
        <text>D-ribulose 1,5-bisphosphate + O2 = 2-phosphoglycolate + (2R)-3-phosphoglycerate + 2 H(+)</text>
        <dbReference type="Rhea" id="RHEA:36631"/>
        <dbReference type="ChEBI" id="CHEBI:15378"/>
        <dbReference type="ChEBI" id="CHEBI:15379"/>
        <dbReference type="ChEBI" id="CHEBI:57870"/>
        <dbReference type="ChEBI" id="CHEBI:58033"/>
        <dbReference type="ChEBI" id="CHEBI:58272"/>
    </reaction>
</comment>
<comment type="cofactor">
    <cofactor evidence="1">
        <name>Mg(2+)</name>
        <dbReference type="ChEBI" id="CHEBI:18420"/>
    </cofactor>
    <text evidence="1">Binds 1 Mg(2+) ion per subunit.</text>
</comment>
<comment type="subunit">
    <text evidence="1">Heterohexadecamer of 8 large chains and 8 small chains; disulfide-linked. The disulfide link is formed within the large subunit homodimers.</text>
</comment>
<comment type="subcellular location">
    <subcellularLocation>
        <location>Plastid</location>
        <location>Chloroplast</location>
    </subcellularLocation>
</comment>
<comment type="PTM">
    <text evidence="1">The disulfide bond which can form in the large chain dimeric partners within the hexadecamer appears to be associated with oxidative stress and protein turnover.</text>
</comment>
<comment type="miscellaneous">
    <text evidence="1">The basic functional RuBisCO is composed of a large chain homodimer in a 'head-to-tail' conformation. In form I RuBisCO this homodimer is arranged in a barrel-like tetramer with the small subunits forming a tetrameric 'cap' on each end of the 'barrel'.</text>
</comment>
<comment type="similarity">
    <text evidence="1">Belongs to the RuBisCO large chain family. Type I subfamily.</text>
</comment>
<feature type="propeptide" id="PRO_0000031251" evidence="1">
    <location>
        <begin position="1"/>
        <end position="2"/>
    </location>
</feature>
<feature type="chain" id="PRO_0000031252" description="Ribulose bisphosphate carboxylase large chain">
    <location>
        <begin position="3"/>
        <end position="479"/>
    </location>
</feature>
<feature type="active site" description="Proton acceptor" evidence="1">
    <location>
        <position position="175"/>
    </location>
</feature>
<feature type="active site" description="Proton acceptor" evidence="1">
    <location>
        <position position="294"/>
    </location>
</feature>
<feature type="binding site" description="in homodimeric partner" evidence="1">
    <location>
        <position position="123"/>
    </location>
    <ligand>
        <name>substrate</name>
    </ligand>
</feature>
<feature type="binding site" evidence="1">
    <location>
        <position position="173"/>
    </location>
    <ligand>
        <name>substrate</name>
    </ligand>
</feature>
<feature type="binding site" evidence="1">
    <location>
        <position position="177"/>
    </location>
    <ligand>
        <name>substrate</name>
    </ligand>
</feature>
<feature type="binding site" description="via carbamate group" evidence="1">
    <location>
        <position position="201"/>
    </location>
    <ligand>
        <name>Mg(2+)</name>
        <dbReference type="ChEBI" id="CHEBI:18420"/>
    </ligand>
</feature>
<feature type="binding site" evidence="1">
    <location>
        <position position="203"/>
    </location>
    <ligand>
        <name>Mg(2+)</name>
        <dbReference type="ChEBI" id="CHEBI:18420"/>
    </ligand>
</feature>
<feature type="binding site" evidence="1">
    <location>
        <position position="204"/>
    </location>
    <ligand>
        <name>Mg(2+)</name>
        <dbReference type="ChEBI" id="CHEBI:18420"/>
    </ligand>
</feature>
<feature type="binding site" evidence="1">
    <location>
        <position position="295"/>
    </location>
    <ligand>
        <name>substrate</name>
    </ligand>
</feature>
<feature type="binding site" evidence="1">
    <location>
        <position position="327"/>
    </location>
    <ligand>
        <name>substrate</name>
    </ligand>
</feature>
<feature type="binding site" evidence="1">
    <location>
        <position position="379"/>
    </location>
    <ligand>
        <name>substrate</name>
    </ligand>
</feature>
<feature type="site" description="Transition state stabilizer" evidence="1">
    <location>
        <position position="334"/>
    </location>
</feature>
<feature type="modified residue" description="N-acetylproline" evidence="1">
    <location>
        <position position="3"/>
    </location>
</feature>
<feature type="modified residue" description="N6-carboxylysine" evidence="1">
    <location>
        <position position="201"/>
    </location>
</feature>
<feature type="disulfide bond" description="Interchain; in linked form" evidence="1">
    <location>
        <position position="247"/>
    </location>
</feature>
<accession>P05698</accession>
<accession>A1E9J9</accession>
<dbReference type="EC" id="4.1.1.39" evidence="1"/>
<dbReference type="EMBL" id="EF115541">
    <property type="protein sequence ID" value="ABK79421.1"/>
    <property type="molecule type" value="Genomic_DNA"/>
</dbReference>
<dbReference type="EMBL" id="X00630">
    <property type="protein sequence ID" value="CAA25265.1"/>
    <property type="molecule type" value="Genomic_DNA"/>
</dbReference>
<dbReference type="PIR" id="S08610">
    <property type="entry name" value="RKBHLC"/>
</dbReference>
<dbReference type="RefSeq" id="YP_010144433.1">
    <property type="nucleotide sequence ID" value="NC_056985.1"/>
</dbReference>
<dbReference type="RefSeq" id="YP_874661.1">
    <property type="nucleotide sequence ID" value="NC_008590.1"/>
</dbReference>
<dbReference type="SMR" id="P05698"/>
<dbReference type="GeneID" id="4525187"/>
<dbReference type="GeneID" id="67140618"/>
<dbReference type="OMA" id="IHGHPDG"/>
<dbReference type="GO" id="GO:0009507">
    <property type="term" value="C:chloroplast"/>
    <property type="evidence" value="ECO:0007669"/>
    <property type="project" value="UniProtKB-SubCell"/>
</dbReference>
<dbReference type="GO" id="GO:0000287">
    <property type="term" value="F:magnesium ion binding"/>
    <property type="evidence" value="ECO:0007669"/>
    <property type="project" value="UniProtKB-UniRule"/>
</dbReference>
<dbReference type="GO" id="GO:0004497">
    <property type="term" value="F:monooxygenase activity"/>
    <property type="evidence" value="ECO:0007669"/>
    <property type="project" value="UniProtKB-KW"/>
</dbReference>
<dbReference type="GO" id="GO:0016984">
    <property type="term" value="F:ribulose-bisphosphate carboxylase activity"/>
    <property type="evidence" value="ECO:0007669"/>
    <property type="project" value="UniProtKB-UniRule"/>
</dbReference>
<dbReference type="GO" id="GO:0009853">
    <property type="term" value="P:photorespiration"/>
    <property type="evidence" value="ECO:0007669"/>
    <property type="project" value="UniProtKB-KW"/>
</dbReference>
<dbReference type="GO" id="GO:0019253">
    <property type="term" value="P:reductive pentose-phosphate cycle"/>
    <property type="evidence" value="ECO:0007669"/>
    <property type="project" value="UniProtKB-UniRule"/>
</dbReference>
<dbReference type="CDD" id="cd08212">
    <property type="entry name" value="RuBisCO_large_I"/>
    <property type="match status" value="1"/>
</dbReference>
<dbReference type="FunFam" id="3.20.20.110:FF:000001">
    <property type="entry name" value="Ribulose bisphosphate carboxylase large chain"/>
    <property type="match status" value="1"/>
</dbReference>
<dbReference type="FunFam" id="3.30.70.150:FF:000001">
    <property type="entry name" value="Ribulose bisphosphate carboxylase large chain"/>
    <property type="match status" value="1"/>
</dbReference>
<dbReference type="Gene3D" id="3.20.20.110">
    <property type="entry name" value="Ribulose bisphosphate carboxylase, large subunit, C-terminal domain"/>
    <property type="match status" value="1"/>
</dbReference>
<dbReference type="Gene3D" id="3.30.70.150">
    <property type="entry name" value="RuBisCO large subunit, N-terminal domain"/>
    <property type="match status" value="1"/>
</dbReference>
<dbReference type="HAMAP" id="MF_01338">
    <property type="entry name" value="RuBisCO_L_type1"/>
    <property type="match status" value="1"/>
</dbReference>
<dbReference type="InterPro" id="IPR033966">
    <property type="entry name" value="RuBisCO"/>
</dbReference>
<dbReference type="InterPro" id="IPR020878">
    <property type="entry name" value="RuBisCo_large_chain_AS"/>
</dbReference>
<dbReference type="InterPro" id="IPR000685">
    <property type="entry name" value="RuBisCO_lsu_C"/>
</dbReference>
<dbReference type="InterPro" id="IPR036376">
    <property type="entry name" value="RuBisCO_lsu_C_sf"/>
</dbReference>
<dbReference type="InterPro" id="IPR017443">
    <property type="entry name" value="RuBisCO_lsu_fd_N"/>
</dbReference>
<dbReference type="InterPro" id="IPR036422">
    <property type="entry name" value="RuBisCO_lsu_N_sf"/>
</dbReference>
<dbReference type="InterPro" id="IPR020888">
    <property type="entry name" value="RuBisCO_lsuI"/>
</dbReference>
<dbReference type="NCBIfam" id="NF003252">
    <property type="entry name" value="PRK04208.1"/>
    <property type="match status" value="1"/>
</dbReference>
<dbReference type="PANTHER" id="PTHR42704">
    <property type="entry name" value="RIBULOSE BISPHOSPHATE CARBOXYLASE"/>
    <property type="match status" value="1"/>
</dbReference>
<dbReference type="PANTHER" id="PTHR42704:SF15">
    <property type="entry name" value="RIBULOSE BISPHOSPHATE CARBOXYLASE LARGE CHAIN"/>
    <property type="match status" value="1"/>
</dbReference>
<dbReference type="Pfam" id="PF00016">
    <property type="entry name" value="RuBisCO_large"/>
    <property type="match status" value="1"/>
</dbReference>
<dbReference type="Pfam" id="PF02788">
    <property type="entry name" value="RuBisCO_large_N"/>
    <property type="match status" value="1"/>
</dbReference>
<dbReference type="SFLD" id="SFLDG01052">
    <property type="entry name" value="RuBisCO"/>
    <property type="match status" value="1"/>
</dbReference>
<dbReference type="SFLD" id="SFLDS00014">
    <property type="entry name" value="RuBisCO"/>
    <property type="match status" value="1"/>
</dbReference>
<dbReference type="SFLD" id="SFLDG00301">
    <property type="entry name" value="RuBisCO-like_proteins"/>
    <property type="match status" value="1"/>
</dbReference>
<dbReference type="SUPFAM" id="SSF51649">
    <property type="entry name" value="RuBisCo, C-terminal domain"/>
    <property type="match status" value="1"/>
</dbReference>
<dbReference type="SUPFAM" id="SSF54966">
    <property type="entry name" value="RuBisCO, large subunit, small (N-terminal) domain"/>
    <property type="match status" value="1"/>
</dbReference>
<dbReference type="PROSITE" id="PS00157">
    <property type="entry name" value="RUBISCO_LARGE"/>
    <property type="match status" value="1"/>
</dbReference>
<evidence type="ECO:0000255" key="1">
    <source>
        <dbReference type="HAMAP-Rule" id="MF_01338"/>
    </source>
</evidence>
<name>RBL_HORVU</name>
<sequence>MSPQTETKAGVGFQAGVKDYKLTYYTPEYETKDTDILAAFRVSPQPGVPPEEAGAAVAAESSTGTWTTVWTDGLTSLDRYKGRCYHIEPVAGEDSQWICYVAYPLDLFEEGSVTNMFTSIVGNVFGFKALRALRLEDLRIPPTYSKTFQGPPHGIQVERDKLNKYGRPLLGCTIKPKLGLSAKNYGRACYECLRGGLDFTKDDENVNSQPFMRWRDRFVFCAEAIYKSQAETGEIKGHYLNATAGTCEEMIKRAVFARELGVPIVMHDYLTGGFTANTTLAHYCRDNGLLLHIHRAMHAVIDRQKNHGMHFRVLAKALRMSGGDHIHSGTVVGKLEGEREMTLGFVDLLRDDFIEKDRARGIFFTQDWVSMPGVIPVASGGIHVWHMPALTEIFGDDSVLQFGGGTLGHPWGNAPGAAANRVALEACVQARNEGRDLAREGNEIIRAACKWSPELAAACEVWKAIKFEFEPVDTIDKKV</sequence>
<organism>
    <name type="scientific">Hordeum vulgare</name>
    <name type="common">Barley</name>
    <dbReference type="NCBI Taxonomy" id="4513"/>
    <lineage>
        <taxon>Eukaryota</taxon>
        <taxon>Viridiplantae</taxon>
        <taxon>Streptophyta</taxon>
        <taxon>Embryophyta</taxon>
        <taxon>Tracheophyta</taxon>
        <taxon>Spermatophyta</taxon>
        <taxon>Magnoliopsida</taxon>
        <taxon>Liliopsida</taxon>
        <taxon>Poales</taxon>
        <taxon>Poaceae</taxon>
        <taxon>BOP clade</taxon>
        <taxon>Pooideae</taxon>
        <taxon>Triticodae</taxon>
        <taxon>Triticeae</taxon>
        <taxon>Hordeinae</taxon>
        <taxon>Hordeum</taxon>
    </lineage>
</organism>
<keyword id="KW-0007">Acetylation</keyword>
<keyword id="KW-0113">Calvin cycle</keyword>
<keyword id="KW-0120">Carbon dioxide fixation</keyword>
<keyword id="KW-0150">Chloroplast</keyword>
<keyword id="KW-1015">Disulfide bond</keyword>
<keyword id="KW-0456">Lyase</keyword>
<keyword id="KW-0460">Magnesium</keyword>
<keyword id="KW-0479">Metal-binding</keyword>
<keyword id="KW-0503">Monooxygenase</keyword>
<keyword id="KW-0560">Oxidoreductase</keyword>
<keyword id="KW-0601">Photorespiration</keyword>
<keyword id="KW-0602">Photosynthesis</keyword>
<keyword id="KW-0934">Plastid</keyword>
<reference key="1">
    <citation type="journal article" date="2007" name="Theor. Appl. Genet.">
        <title>Complete chloroplast genome sequences of Hordeum vulgare, Sorghum bicolor and Agrostis stolonifera, and comparative analyses with other grass genomes.</title>
        <authorList>
            <person name="Saski C."/>
            <person name="Lee S.-B."/>
            <person name="Fjellheim S."/>
            <person name="Guda C."/>
            <person name="Jansen R.K."/>
            <person name="Luo H."/>
            <person name="Tomkins J."/>
            <person name="Rognli O.A."/>
            <person name="Daniell H."/>
            <person name="Clarke J.L."/>
        </authorList>
    </citation>
    <scope>NUCLEOTIDE SEQUENCE [LARGE SCALE GENOMIC DNA]</scope>
    <source>
        <strain>cv. Morex</strain>
    </source>
</reference>
<reference key="2">
    <citation type="journal article" date="1984" name="Genetics">
        <title>The nature of nucleotide sequence divergence between barley and maize chloroplast DNA.</title>
        <authorList>
            <person name="Zurawski G."/>
            <person name="Clegg M.T."/>
            <person name="Brown A.H.D."/>
        </authorList>
    </citation>
    <scope>NUCLEOTIDE SEQUENCE [GENOMIC DNA] OF 1-426</scope>
</reference>